<reference key="1">
    <citation type="journal article" date="2001" name="Nature">
        <title>Genome sequence of enterohaemorrhagic Escherichia coli O157:H7.</title>
        <authorList>
            <person name="Perna N.T."/>
            <person name="Plunkett G. III"/>
            <person name="Burland V."/>
            <person name="Mau B."/>
            <person name="Glasner J.D."/>
            <person name="Rose D.J."/>
            <person name="Mayhew G.F."/>
            <person name="Evans P.S."/>
            <person name="Gregor J."/>
            <person name="Kirkpatrick H.A."/>
            <person name="Posfai G."/>
            <person name="Hackett J."/>
            <person name="Klink S."/>
            <person name="Boutin A."/>
            <person name="Shao Y."/>
            <person name="Miller L."/>
            <person name="Grotbeck E.J."/>
            <person name="Davis N.W."/>
            <person name="Lim A."/>
            <person name="Dimalanta E.T."/>
            <person name="Potamousis K."/>
            <person name="Apodaca J."/>
            <person name="Anantharaman T.S."/>
            <person name="Lin J."/>
            <person name="Yen G."/>
            <person name="Schwartz D.C."/>
            <person name="Welch R.A."/>
            <person name="Blattner F.R."/>
        </authorList>
    </citation>
    <scope>NUCLEOTIDE SEQUENCE [LARGE SCALE GENOMIC DNA]</scope>
    <source>
        <strain>O157:H7 / EDL933 / ATCC 700927 / EHEC</strain>
    </source>
</reference>
<gene>
    <name evidence="2" type="primary">ung</name>
    <name type="ordered locus">Z3864</name>
</gene>
<proteinExistence type="inferred from homology"/>
<protein>
    <recommendedName>
        <fullName evidence="2">Uracil-DNA glycosylase</fullName>
        <shortName evidence="2">UDG</shortName>
        <ecNumber evidence="2">3.2.2.27</ecNumber>
    </recommendedName>
</protein>
<comment type="function">
    <text evidence="2">Excises uracil residues from the DNA which can arise as a result of misincorporation of dUMP residues by DNA polymerase or due to deamination of cytosine.</text>
</comment>
<comment type="catalytic activity">
    <reaction evidence="2">
        <text>Hydrolyzes single-stranded DNA or mismatched double-stranded DNA and polynucleotides, releasing free uracil.</text>
        <dbReference type="EC" id="3.2.2.27"/>
    </reaction>
</comment>
<comment type="subunit">
    <text evidence="1">Monomer.</text>
</comment>
<comment type="subcellular location">
    <subcellularLocation>
        <location evidence="2">Cytoplasm</location>
    </subcellularLocation>
</comment>
<comment type="similarity">
    <text evidence="2">Belongs to the uracil-DNA glycosylase (UDG) superfamily. UNG family.</text>
</comment>
<feature type="initiator methionine" description="Removed" evidence="1">
    <location>
        <position position="1"/>
    </location>
</feature>
<feature type="chain" id="PRO_0000176093" description="Uracil-DNA glycosylase">
    <location>
        <begin position="2"/>
        <end position="229"/>
    </location>
</feature>
<feature type="active site" description="Proton acceptor" evidence="2">
    <location>
        <position position="64"/>
    </location>
</feature>
<name>UNG_ECO57</name>
<accession>Q8X444</accession>
<keyword id="KW-0963">Cytoplasm</keyword>
<keyword id="KW-0227">DNA damage</keyword>
<keyword id="KW-0234">DNA repair</keyword>
<keyword id="KW-0378">Hydrolase</keyword>
<dbReference type="EC" id="3.2.2.27" evidence="2"/>
<dbReference type="EMBL" id="AE005174">
    <property type="protein sequence ID" value="AAG57696.1"/>
    <property type="molecule type" value="Genomic_DNA"/>
</dbReference>
<dbReference type="PIR" id="D85904">
    <property type="entry name" value="D85904"/>
</dbReference>
<dbReference type="RefSeq" id="WP_001262720.1">
    <property type="nucleotide sequence ID" value="NZ_VOAI01000001.1"/>
</dbReference>
<dbReference type="SMR" id="Q8X444"/>
<dbReference type="STRING" id="386585.gene:10366496"/>
<dbReference type="DrugBank" id="DB03419">
    <property type="generic name" value="Uracil"/>
</dbReference>
<dbReference type="KEGG" id="ece:Z3864"/>
<dbReference type="PATRIC" id="fig|83334.175.peg.5888"/>
<dbReference type="eggNOG" id="COG0692">
    <property type="taxonomic scope" value="Bacteria"/>
</dbReference>
<dbReference type="OMA" id="PDNGYLM"/>
<dbReference type="Proteomes" id="UP000002519">
    <property type="component" value="Chromosome"/>
</dbReference>
<dbReference type="GO" id="GO:0005737">
    <property type="term" value="C:cytoplasm"/>
    <property type="evidence" value="ECO:0007669"/>
    <property type="project" value="UniProtKB-SubCell"/>
</dbReference>
<dbReference type="GO" id="GO:0004844">
    <property type="term" value="F:uracil DNA N-glycosylase activity"/>
    <property type="evidence" value="ECO:0007669"/>
    <property type="project" value="UniProtKB-UniRule"/>
</dbReference>
<dbReference type="GO" id="GO:0097510">
    <property type="term" value="P:base-excision repair, AP site formation via deaminated base removal"/>
    <property type="evidence" value="ECO:0007669"/>
    <property type="project" value="TreeGrafter"/>
</dbReference>
<dbReference type="CDD" id="cd10027">
    <property type="entry name" value="UDG-F1-like"/>
    <property type="match status" value="1"/>
</dbReference>
<dbReference type="FunFam" id="3.40.470.10:FF:000001">
    <property type="entry name" value="Uracil-DNA glycosylase"/>
    <property type="match status" value="1"/>
</dbReference>
<dbReference type="Gene3D" id="3.40.470.10">
    <property type="entry name" value="Uracil-DNA glycosylase-like domain"/>
    <property type="match status" value="1"/>
</dbReference>
<dbReference type="HAMAP" id="MF_00148">
    <property type="entry name" value="UDG"/>
    <property type="match status" value="1"/>
</dbReference>
<dbReference type="InterPro" id="IPR002043">
    <property type="entry name" value="UDG_fam1"/>
</dbReference>
<dbReference type="InterPro" id="IPR018085">
    <property type="entry name" value="Ura-DNA_Glyclase_AS"/>
</dbReference>
<dbReference type="InterPro" id="IPR005122">
    <property type="entry name" value="Uracil-DNA_glycosylase-like"/>
</dbReference>
<dbReference type="InterPro" id="IPR036895">
    <property type="entry name" value="Uracil-DNA_glycosylase-like_sf"/>
</dbReference>
<dbReference type="NCBIfam" id="NF003588">
    <property type="entry name" value="PRK05254.1-1"/>
    <property type="match status" value="1"/>
</dbReference>
<dbReference type="NCBIfam" id="NF003589">
    <property type="entry name" value="PRK05254.1-2"/>
    <property type="match status" value="1"/>
</dbReference>
<dbReference type="NCBIfam" id="NF003591">
    <property type="entry name" value="PRK05254.1-4"/>
    <property type="match status" value="1"/>
</dbReference>
<dbReference type="NCBIfam" id="NF003592">
    <property type="entry name" value="PRK05254.1-5"/>
    <property type="match status" value="1"/>
</dbReference>
<dbReference type="NCBIfam" id="TIGR00628">
    <property type="entry name" value="ung"/>
    <property type="match status" value="1"/>
</dbReference>
<dbReference type="PANTHER" id="PTHR11264">
    <property type="entry name" value="URACIL-DNA GLYCOSYLASE"/>
    <property type="match status" value="1"/>
</dbReference>
<dbReference type="PANTHER" id="PTHR11264:SF0">
    <property type="entry name" value="URACIL-DNA GLYCOSYLASE"/>
    <property type="match status" value="1"/>
</dbReference>
<dbReference type="Pfam" id="PF03167">
    <property type="entry name" value="UDG"/>
    <property type="match status" value="1"/>
</dbReference>
<dbReference type="SMART" id="SM00986">
    <property type="entry name" value="UDG"/>
    <property type="match status" value="1"/>
</dbReference>
<dbReference type="SMART" id="SM00987">
    <property type="entry name" value="UreE_C"/>
    <property type="match status" value="1"/>
</dbReference>
<dbReference type="SUPFAM" id="SSF52141">
    <property type="entry name" value="Uracil-DNA glycosylase-like"/>
    <property type="match status" value="1"/>
</dbReference>
<dbReference type="PROSITE" id="PS00130">
    <property type="entry name" value="U_DNA_GLYCOSYLASE"/>
    <property type="match status" value="1"/>
</dbReference>
<evidence type="ECO:0000250" key="1"/>
<evidence type="ECO:0000255" key="2">
    <source>
        <dbReference type="HAMAP-Rule" id="MF_00148"/>
    </source>
</evidence>
<sequence>MANELTWHDVLAEEKQQPYFLNTLQTVASERQSGVTIYPPQKDVFNAFRFTELGDVKVVILGQDPYHGPGQAHGLAFSVRPGIATPPSLLNMYKELENTIPGFTRPNHGYLESWARQGVLLLNTVLTVRAGQAHSHASLGWETFTDKVISLINQHREGVVFLLWGSHAQKKGAIIDKQRHHVLKAPHPSPLSAHRGFFGCNHFVLANQWLEQHGETPIDWMPVLPAESE</sequence>
<organism>
    <name type="scientific">Escherichia coli O157:H7</name>
    <dbReference type="NCBI Taxonomy" id="83334"/>
    <lineage>
        <taxon>Bacteria</taxon>
        <taxon>Pseudomonadati</taxon>
        <taxon>Pseudomonadota</taxon>
        <taxon>Gammaproteobacteria</taxon>
        <taxon>Enterobacterales</taxon>
        <taxon>Enterobacteriaceae</taxon>
        <taxon>Escherichia</taxon>
    </lineage>
</organism>